<name>KAD_STRPS</name>
<evidence type="ECO:0000255" key="1">
    <source>
        <dbReference type="HAMAP-Rule" id="MF_00235"/>
    </source>
</evidence>
<protein>
    <recommendedName>
        <fullName evidence="1">Adenylate kinase</fullName>
        <shortName evidence="1">AK</shortName>
        <ecNumber evidence="1">2.7.4.3</ecNumber>
    </recommendedName>
    <alternativeName>
        <fullName evidence="1">ATP-AMP transphosphorylase</fullName>
    </alternativeName>
    <alternativeName>
        <fullName evidence="1">ATP:AMP phosphotransferase</fullName>
    </alternativeName>
    <alternativeName>
        <fullName evidence="1">Adenylate monophosphate kinase</fullName>
    </alternativeName>
</protein>
<sequence length="212" mass="23707">MNLLIMGLPGAGKGTQAAKIVEQFHVAHISTGDMFRAAMANQTEMGVLAKSYIDKGELVPDEVTNGIVKERLSQDDIKETGFLLDGYPRTIEQAHALDKTLAELGIELEGVINIEVNPDSLLERLSGRIIHRVTGETFHKVFNPPVDYKEEDYYQREDDKPETVKRRLDVNIAQGEPIIAHYRAKGLVHDIEGNQDINDVFSDIEKVLTNLK</sequence>
<reference key="1">
    <citation type="journal article" date="2009" name="BMC Genomics">
        <title>Genome evolution driven by host adaptations results in a more virulent and antimicrobial-resistant Streptococcus pneumoniae serotype 14.</title>
        <authorList>
            <person name="Ding F."/>
            <person name="Tang P."/>
            <person name="Hsu M.-H."/>
            <person name="Cui P."/>
            <person name="Hu S."/>
            <person name="Yu J."/>
            <person name="Chiu C.-H."/>
        </authorList>
    </citation>
    <scope>NUCLEOTIDE SEQUENCE [LARGE SCALE GENOMIC DNA]</scope>
    <source>
        <strain>CGSP14</strain>
    </source>
</reference>
<keyword id="KW-0067">ATP-binding</keyword>
<keyword id="KW-0963">Cytoplasm</keyword>
<keyword id="KW-0418">Kinase</keyword>
<keyword id="KW-0545">Nucleotide biosynthesis</keyword>
<keyword id="KW-0547">Nucleotide-binding</keyword>
<keyword id="KW-0808">Transferase</keyword>
<comment type="function">
    <text evidence="1">Catalyzes the reversible transfer of the terminal phosphate group between ATP and AMP. Plays an important role in cellular energy homeostasis and in adenine nucleotide metabolism.</text>
</comment>
<comment type="catalytic activity">
    <reaction evidence="1">
        <text>AMP + ATP = 2 ADP</text>
        <dbReference type="Rhea" id="RHEA:12973"/>
        <dbReference type="ChEBI" id="CHEBI:30616"/>
        <dbReference type="ChEBI" id="CHEBI:456215"/>
        <dbReference type="ChEBI" id="CHEBI:456216"/>
        <dbReference type="EC" id="2.7.4.3"/>
    </reaction>
</comment>
<comment type="pathway">
    <text evidence="1">Purine metabolism; AMP biosynthesis via salvage pathway; AMP from ADP: step 1/1.</text>
</comment>
<comment type="subunit">
    <text evidence="1">Monomer.</text>
</comment>
<comment type="subcellular location">
    <subcellularLocation>
        <location evidence="1">Cytoplasm</location>
    </subcellularLocation>
</comment>
<comment type="domain">
    <text evidence="1">Consists of three domains, a large central CORE domain and two small peripheral domains, NMPbind and LID, which undergo movements during catalysis. The LID domain closes over the site of phosphoryl transfer upon ATP binding. Assembling and dissambling the active center during each catalytic cycle provides an effective means to prevent ATP hydrolysis.</text>
</comment>
<comment type="similarity">
    <text evidence="1">Belongs to the adenylate kinase family.</text>
</comment>
<feature type="chain" id="PRO_1000100615" description="Adenylate kinase">
    <location>
        <begin position="1"/>
        <end position="212"/>
    </location>
</feature>
<feature type="region of interest" description="NMP" evidence="1">
    <location>
        <begin position="30"/>
        <end position="59"/>
    </location>
</feature>
<feature type="region of interest" description="LID" evidence="1">
    <location>
        <begin position="127"/>
        <end position="159"/>
    </location>
</feature>
<feature type="binding site" evidence="1">
    <location>
        <begin position="10"/>
        <end position="15"/>
    </location>
    <ligand>
        <name>ATP</name>
        <dbReference type="ChEBI" id="CHEBI:30616"/>
    </ligand>
</feature>
<feature type="binding site" evidence="1">
    <location>
        <position position="31"/>
    </location>
    <ligand>
        <name>AMP</name>
        <dbReference type="ChEBI" id="CHEBI:456215"/>
    </ligand>
</feature>
<feature type="binding site" evidence="1">
    <location>
        <position position="36"/>
    </location>
    <ligand>
        <name>AMP</name>
        <dbReference type="ChEBI" id="CHEBI:456215"/>
    </ligand>
</feature>
<feature type="binding site" evidence="1">
    <location>
        <begin position="57"/>
        <end position="59"/>
    </location>
    <ligand>
        <name>AMP</name>
        <dbReference type="ChEBI" id="CHEBI:456215"/>
    </ligand>
</feature>
<feature type="binding site" evidence="1">
    <location>
        <begin position="86"/>
        <end position="89"/>
    </location>
    <ligand>
        <name>AMP</name>
        <dbReference type="ChEBI" id="CHEBI:456215"/>
    </ligand>
</feature>
<feature type="binding site" evidence="1">
    <location>
        <position position="93"/>
    </location>
    <ligand>
        <name>AMP</name>
        <dbReference type="ChEBI" id="CHEBI:456215"/>
    </ligand>
</feature>
<feature type="binding site" evidence="1">
    <location>
        <position position="128"/>
    </location>
    <ligand>
        <name>ATP</name>
        <dbReference type="ChEBI" id="CHEBI:30616"/>
    </ligand>
</feature>
<feature type="binding site" evidence="1">
    <location>
        <begin position="137"/>
        <end position="138"/>
    </location>
    <ligand>
        <name>ATP</name>
        <dbReference type="ChEBI" id="CHEBI:30616"/>
    </ligand>
</feature>
<feature type="binding site" evidence="1">
    <location>
        <position position="156"/>
    </location>
    <ligand>
        <name>AMP</name>
        <dbReference type="ChEBI" id="CHEBI:456215"/>
    </ligand>
</feature>
<feature type="binding site" evidence="1">
    <location>
        <position position="167"/>
    </location>
    <ligand>
        <name>AMP</name>
        <dbReference type="ChEBI" id="CHEBI:456215"/>
    </ligand>
</feature>
<feature type="binding site" evidence="1">
    <location>
        <position position="195"/>
    </location>
    <ligand>
        <name>ATP</name>
        <dbReference type="ChEBI" id="CHEBI:30616"/>
    </ligand>
</feature>
<gene>
    <name evidence="1" type="primary">adk</name>
    <name type="ordered locus">SPCG_0239</name>
</gene>
<proteinExistence type="inferred from homology"/>
<accession>B2IS63</accession>
<dbReference type="EC" id="2.7.4.3" evidence="1"/>
<dbReference type="EMBL" id="CP001033">
    <property type="protein sequence ID" value="ACB89491.1"/>
    <property type="molecule type" value="Genomic_DNA"/>
</dbReference>
<dbReference type="RefSeq" id="WP_001050436.1">
    <property type="nucleotide sequence ID" value="NC_010582.1"/>
</dbReference>
<dbReference type="SMR" id="B2IS63"/>
<dbReference type="KEGG" id="spw:SPCG_0239"/>
<dbReference type="HOGENOM" id="CLU_032354_1_2_9"/>
<dbReference type="UniPathway" id="UPA00588">
    <property type="reaction ID" value="UER00649"/>
</dbReference>
<dbReference type="GO" id="GO:0005737">
    <property type="term" value="C:cytoplasm"/>
    <property type="evidence" value="ECO:0007669"/>
    <property type="project" value="UniProtKB-SubCell"/>
</dbReference>
<dbReference type="GO" id="GO:0004017">
    <property type="term" value="F:adenylate kinase activity"/>
    <property type="evidence" value="ECO:0007669"/>
    <property type="project" value="UniProtKB-UniRule"/>
</dbReference>
<dbReference type="GO" id="GO:0005524">
    <property type="term" value="F:ATP binding"/>
    <property type="evidence" value="ECO:0007669"/>
    <property type="project" value="UniProtKB-UniRule"/>
</dbReference>
<dbReference type="GO" id="GO:0044209">
    <property type="term" value="P:AMP salvage"/>
    <property type="evidence" value="ECO:0007669"/>
    <property type="project" value="UniProtKB-UniRule"/>
</dbReference>
<dbReference type="CDD" id="cd01428">
    <property type="entry name" value="ADK"/>
    <property type="match status" value="1"/>
</dbReference>
<dbReference type="FunFam" id="3.40.50.300:FF:000106">
    <property type="entry name" value="Adenylate kinase mitochondrial"/>
    <property type="match status" value="1"/>
</dbReference>
<dbReference type="Gene3D" id="3.40.50.300">
    <property type="entry name" value="P-loop containing nucleotide triphosphate hydrolases"/>
    <property type="match status" value="1"/>
</dbReference>
<dbReference type="HAMAP" id="MF_00235">
    <property type="entry name" value="Adenylate_kinase_Adk"/>
    <property type="match status" value="1"/>
</dbReference>
<dbReference type="InterPro" id="IPR006259">
    <property type="entry name" value="Adenyl_kin_sub"/>
</dbReference>
<dbReference type="InterPro" id="IPR000850">
    <property type="entry name" value="Adenylat/UMP-CMP_kin"/>
</dbReference>
<dbReference type="InterPro" id="IPR033690">
    <property type="entry name" value="Adenylat_kinase_CS"/>
</dbReference>
<dbReference type="InterPro" id="IPR027417">
    <property type="entry name" value="P-loop_NTPase"/>
</dbReference>
<dbReference type="NCBIfam" id="TIGR01351">
    <property type="entry name" value="adk"/>
    <property type="match status" value="1"/>
</dbReference>
<dbReference type="NCBIfam" id="NF001380">
    <property type="entry name" value="PRK00279.1-2"/>
    <property type="match status" value="1"/>
</dbReference>
<dbReference type="NCBIfam" id="NF001381">
    <property type="entry name" value="PRK00279.1-3"/>
    <property type="match status" value="1"/>
</dbReference>
<dbReference type="NCBIfam" id="NF001382">
    <property type="entry name" value="PRK00279.1-4"/>
    <property type="match status" value="1"/>
</dbReference>
<dbReference type="NCBIfam" id="NF011100">
    <property type="entry name" value="PRK14527.1"/>
    <property type="match status" value="1"/>
</dbReference>
<dbReference type="PANTHER" id="PTHR23359">
    <property type="entry name" value="NUCLEOTIDE KINASE"/>
    <property type="match status" value="1"/>
</dbReference>
<dbReference type="Pfam" id="PF00406">
    <property type="entry name" value="ADK"/>
    <property type="match status" value="1"/>
</dbReference>
<dbReference type="PRINTS" id="PR00094">
    <property type="entry name" value="ADENYLTKNASE"/>
</dbReference>
<dbReference type="SUPFAM" id="SSF52540">
    <property type="entry name" value="P-loop containing nucleoside triphosphate hydrolases"/>
    <property type="match status" value="1"/>
</dbReference>
<dbReference type="PROSITE" id="PS00113">
    <property type="entry name" value="ADENYLATE_KINASE"/>
    <property type="match status" value="1"/>
</dbReference>
<organism>
    <name type="scientific">Streptococcus pneumoniae (strain CGSP14)</name>
    <dbReference type="NCBI Taxonomy" id="516950"/>
    <lineage>
        <taxon>Bacteria</taxon>
        <taxon>Bacillati</taxon>
        <taxon>Bacillota</taxon>
        <taxon>Bacilli</taxon>
        <taxon>Lactobacillales</taxon>
        <taxon>Streptococcaceae</taxon>
        <taxon>Streptococcus</taxon>
    </lineage>
</organism>